<accession>Q05423</accession>
<sequence length="132" mass="14927">MVEAFCATWKLADSHNFDEYMKALGVGFAMRQVGNVTKPTVIISSEGDKVVIRTQSTFKNTEISFKLGEEFDETTPDDRNCKSVVTLDGDKLVHVQKWDGKETNFVREIKDGRMVMTLTFGDVVAVRHYEKA</sequence>
<name>FABP7_CHICK</name>
<evidence type="ECO:0000250" key="1"/>
<evidence type="ECO:0000269" key="2">
    <source>
    </source>
</evidence>
<evidence type="ECO:0000305" key="3"/>
<dbReference type="EMBL" id="X65459">
    <property type="protein sequence ID" value="CAA46451.1"/>
    <property type="molecule type" value="mRNA"/>
</dbReference>
<dbReference type="PIR" id="A49184">
    <property type="entry name" value="A49184"/>
</dbReference>
<dbReference type="RefSeq" id="NP_990639.1">
    <property type="nucleotide sequence ID" value="NM_205308.3"/>
</dbReference>
<dbReference type="SMR" id="Q05423"/>
<dbReference type="FunCoup" id="Q05423">
    <property type="interactions" value="56"/>
</dbReference>
<dbReference type="STRING" id="9031.ENSGALP00000062776"/>
<dbReference type="PaxDb" id="9031-ENSGALP00000023941"/>
<dbReference type="GeneID" id="396246"/>
<dbReference type="KEGG" id="gga:396246"/>
<dbReference type="CTD" id="2173"/>
<dbReference type="VEuPathDB" id="HostDB:geneid_396246"/>
<dbReference type="eggNOG" id="KOG4015">
    <property type="taxonomic scope" value="Eukaryota"/>
</dbReference>
<dbReference type="HOGENOM" id="CLU_113772_0_0_1"/>
<dbReference type="InParanoid" id="Q05423"/>
<dbReference type="OMA" id="VAIRHYE"/>
<dbReference type="OrthoDB" id="354351at2759"/>
<dbReference type="PhylomeDB" id="Q05423"/>
<dbReference type="Reactome" id="R-GGA-163560">
    <property type="pathway name" value="Triglyceride catabolism"/>
</dbReference>
<dbReference type="PRO" id="PR:Q05423"/>
<dbReference type="Proteomes" id="UP000000539">
    <property type="component" value="Chromosome 3"/>
</dbReference>
<dbReference type="Bgee" id="ENSGALG00000038933">
    <property type="expression patterns" value="Expressed in kidney and 10 other cell types or tissues"/>
</dbReference>
<dbReference type="GO" id="GO:0005829">
    <property type="term" value="C:cytosol"/>
    <property type="evidence" value="ECO:0000318"/>
    <property type="project" value="GO_Central"/>
</dbReference>
<dbReference type="GO" id="GO:0005634">
    <property type="term" value="C:nucleus"/>
    <property type="evidence" value="ECO:0000318"/>
    <property type="project" value="GO_Central"/>
</dbReference>
<dbReference type="GO" id="GO:0005504">
    <property type="term" value="F:fatty acid binding"/>
    <property type="evidence" value="ECO:0000318"/>
    <property type="project" value="GO_Central"/>
</dbReference>
<dbReference type="GO" id="GO:0008134">
    <property type="term" value="F:transcription factor binding"/>
    <property type="evidence" value="ECO:0000304"/>
    <property type="project" value="AgBase"/>
</dbReference>
<dbReference type="GO" id="GO:0007420">
    <property type="term" value="P:brain development"/>
    <property type="evidence" value="ECO:0000304"/>
    <property type="project" value="AgBase"/>
</dbReference>
<dbReference type="GO" id="GO:0015908">
    <property type="term" value="P:fatty acid transport"/>
    <property type="evidence" value="ECO:0000318"/>
    <property type="project" value="GO_Central"/>
</dbReference>
<dbReference type="GO" id="GO:0003407">
    <property type="term" value="P:neural retina development"/>
    <property type="evidence" value="ECO:0000304"/>
    <property type="project" value="AgBase"/>
</dbReference>
<dbReference type="CDD" id="cd19470">
    <property type="entry name" value="FABP7"/>
    <property type="match status" value="1"/>
</dbReference>
<dbReference type="FunFam" id="2.40.128.20:FF:000001">
    <property type="entry name" value="Fatty acid-binding protein, adipocyte"/>
    <property type="match status" value="1"/>
</dbReference>
<dbReference type="Gene3D" id="2.40.128.20">
    <property type="match status" value="1"/>
</dbReference>
<dbReference type="InterPro" id="IPR012674">
    <property type="entry name" value="Calycin"/>
</dbReference>
<dbReference type="InterPro" id="IPR000463">
    <property type="entry name" value="Fatty_acid-bd"/>
</dbReference>
<dbReference type="InterPro" id="IPR031259">
    <property type="entry name" value="ILBP"/>
</dbReference>
<dbReference type="InterPro" id="IPR000566">
    <property type="entry name" value="Lipocln_cytosolic_FA-bd_dom"/>
</dbReference>
<dbReference type="PANTHER" id="PTHR11955">
    <property type="entry name" value="FATTY ACID BINDING PROTEIN"/>
    <property type="match status" value="1"/>
</dbReference>
<dbReference type="Pfam" id="PF00061">
    <property type="entry name" value="Lipocalin"/>
    <property type="match status" value="1"/>
</dbReference>
<dbReference type="PRINTS" id="PR00178">
    <property type="entry name" value="FATTYACIDBP"/>
</dbReference>
<dbReference type="SUPFAM" id="SSF50814">
    <property type="entry name" value="Lipocalins"/>
    <property type="match status" value="1"/>
</dbReference>
<dbReference type="PROSITE" id="PS00214">
    <property type="entry name" value="FABP"/>
    <property type="match status" value="1"/>
</dbReference>
<comment type="function">
    <text evidence="1">FABPs are thought to play a role in the intracellular transport of long-chain fatty acids and their acyl-CoA esters.</text>
</comment>
<comment type="subcellular location">
    <subcellularLocation>
        <location evidence="1">Cytoplasm</location>
    </subcellularLocation>
</comment>
<comment type="developmental stage">
    <text evidence="2">Highest expression in early stages of retinal development with a 50-100 fold decrease from day 3 to day 19 of retina maturation.</text>
</comment>
<comment type="domain">
    <text evidence="1">Forms a beta-barrel structure that accommodates hydrophobic ligands in its interior.</text>
</comment>
<comment type="similarity">
    <text evidence="3">Belongs to the calycin superfamily. Fatty-acid binding protein (FABP) family.</text>
</comment>
<reference key="1">
    <citation type="journal article" date="1993" name="Exp. Eye Res.">
        <title>Identification and characterization of transcripts present at elevated levels in the undifferentiated chick retina.</title>
        <authorList>
            <person name="Godbout R."/>
        </authorList>
    </citation>
    <scope>NUCLEOTIDE SEQUENCE [MRNA]</scope>
    <scope>DEVELOPMENTAL STAGE</scope>
    <source>
        <tissue>Embryonic retina</tissue>
    </source>
</reference>
<feature type="initiator methionine" description="Removed" evidence="1">
    <location>
        <position position="1"/>
    </location>
</feature>
<feature type="chain" id="PRO_0000067371" description="Fatty acid-binding protein, brain">
    <location>
        <begin position="2"/>
        <end position="132"/>
    </location>
</feature>
<feature type="binding site" evidence="1">
    <location>
        <begin position="127"/>
        <end position="129"/>
    </location>
    <ligand>
        <name>a fatty acid</name>
        <dbReference type="ChEBI" id="CHEBI:28868"/>
    </ligand>
</feature>
<feature type="modified residue" description="N-acetylvaline" evidence="1">
    <location>
        <position position="2"/>
    </location>
</feature>
<proteinExistence type="evidence at transcript level"/>
<gene>
    <name type="primary">FABP7</name>
</gene>
<organism>
    <name type="scientific">Gallus gallus</name>
    <name type="common">Chicken</name>
    <dbReference type="NCBI Taxonomy" id="9031"/>
    <lineage>
        <taxon>Eukaryota</taxon>
        <taxon>Metazoa</taxon>
        <taxon>Chordata</taxon>
        <taxon>Craniata</taxon>
        <taxon>Vertebrata</taxon>
        <taxon>Euteleostomi</taxon>
        <taxon>Archelosauria</taxon>
        <taxon>Archosauria</taxon>
        <taxon>Dinosauria</taxon>
        <taxon>Saurischia</taxon>
        <taxon>Theropoda</taxon>
        <taxon>Coelurosauria</taxon>
        <taxon>Aves</taxon>
        <taxon>Neognathae</taxon>
        <taxon>Galloanserae</taxon>
        <taxon>Galliformes</taxon>
        <taxon>Phasianidae</taxon>
        <taxon>Phasianinae</taxon>
        <taxon>Gallus</taxon>
    </lineage>
</organism>
<protein>
    <recommendedName>
        <fullName>Fatty acid-binding protein, brain</fullName>
    </recommendedName>
    <alternativeName>
        <fullName>Brain-type fatty acid-binding protein</fullName>
        <shortName>B-FABP</shortName>
    </alternativeName>
    <alternativeName>
        <fullName>Fatty acid-binding protein 7</fullName>
    </alternativeName>
    <alternativeName>
        <fullName>Fatty acid-binding protein, retina</fullName>
    </alternativeName>
    <alternativeName>
        <fullName>R-FABP</fullName>
    </alternativeName>
</protein>
<keyword id="KW-0007">Acetylation</keyword>
<keyword id="KW-0963">Cytoplasm</keyword>
<keyword id="KW-0446">Lipid-binding</keyword>
<keyword id="KW-1185">Reference proteome</keyword>
<keyword id="KW-0813">Transport</keyword>